<feature type="chain" id="PRO_0000119564" description="Glutamate--tRNA ligase">
    <location>
        <begin position="1"/>
        <end position="468"/>
    </location>
</feature>
<feature type="short sequence motif" description="'HIGH' region" evidence="1">
    <location>
        <begin position="8"/>
        <end position="18"/>
    </location>
</feature>
<feature type="short sequence motif" description="'KMSKS' region" evidence="1">
    <location>
        <begin position="236"/>
        <end position="240"/>
    </location>
</feature>
<feature type="binding site" evidence="1">
    <location>
        <position position="97"/>
    </location>
    <ligand>
        <name>Zn(2+)</name>
        <dbReference type="ChEBI" id="CHEBI:29105"/>
    </ligand>
</feature>
<feature type="binding site" evidence="1">
    <location>
        <position position="99"/>
    </location>
    <ligand>
        <name>Zn(2+)</name>
        <dbReference type="ChEBI" id="CHEBI:29105"/>
    </ligand>
</feature>
<feature type="binding site" evidence="1">
    <location>
        <position position="124"/>
    </location>
    <ligand>
        <name>Zn(2+)</name>
        <dbReference type="ChEBI" id="CHEBI:29105"/>
    </ligand>
</feature>
<feature type="binding site" evidence="1">
    <location>
        <position position="126"/>
    </location>
    <ligand>
        <name>Zn(2+)</name>
        <dbReference type="ChEBI" id="CHEBI:29105"/>
    </ligand>
</feature>
<feature type="binding site" evidence="1">
    <location>
        <position position="239"/>
    </location>
    <ligand>
        <name>ATP</name>
        <dbReference type="ChEBI" id="CHEBI:30616"/>
    </ligand>
</feature>
<sequence>MITTRFAPSPTGFLHVGGVRTALFSWLYAKNNNGKFILRIEDTDLERSTQEAVDAILDGMSWLGLKNDGEIYYQTKRFDRYKEVIQELIADGKAYYCSCSKERLEELREYQQANNLKTGYDGKCRDANYIPQQGESYVVRFKNPQDGVVSWDDAVKGRISISNHELDDMIIQRADGSPTYNFCVVVDDIDMAITHIIRGDDHVNNTPKQINIYKALNANVPIFAHVPMILGPDGAKLSKRHGAVNVMQYREDGYLPQAILNYLVRLGWSHGDQEIFSIEEMIKAFNLEHINASPSRFDFEKLKWLNKHYIKESKFDDIQTEVEYHFAKTGLDISNGPDLKELVAVMAEKVDTLVELAEKSSYFYSDDISYDENAVKKHIKASTGEIFVKLLENFEALDAQQWQDPDVLHNIVSTTAEQCQVGMGKVGMPLRVAITGSGQSPDIGITLKLLGKNKVVARLTKALEELCK</sequence>
<proteinExistence type="inferred from homology"/>
<accession>Q5NHY6</accession>
<comment type="function">
    <text evidence="1">Catalyzes the attachment of glutamate to tRNA(Glu) in a two-step reaction: glutamate is first activated by ATP to form Glu-AMP and then transferred to the acceptor end of tRNA(Glu).</text>
</comment>
<comment type="catalytic activity">
    <reaction evidence="1">
        <text>tRNA(Glu) + L-glutamate + ATP = L-glutamyl-tRNA(Glu) + AMP + diphosphate</text>
        <dbReference type="Rhea" id="RHEA:23540"/>
        <dbReference type="Rhea" id="RHEA-COMP:9663"/>
        <dbReference type="Rhea" id="RHEA-COMP:9680"/>
        <dbReference type="ChEBI" id="CHEBI:29985"/>
        <dbReference type="ChEBI" id="CHEBI:30616"/>
        <dbReference type="ChEBI" id="CHEBI:33019"/>
        <dbReference type="ChEBI" id="CHEBI:78442"/>
        <dbReference type="ChEBI" id="CHEBI:78520"/>
        <dbReference type="ChEBI" id="CHEBI:456215"/>
        <dbReference type="EC" id="6.1.1.17"/>
    </reaction>
</comment>
<comment type="cofactor">
    <cofactor evidence="1">
        <name>Zn(2+)</name>
        <dbReference type="ChEBI" id="CHEBI:29105"/>
    </cofactor>
    <text evidence="1">Binds 1 zinc ion per subunit.</text>
</comment>
<comment type="subunit">
    <text evidence="1">Monomer.</text>
</comment>
<comment type="subcellular location">
    <subcellularLocation>
        <location evidence="1">Cytoplasm</location>
    </subcellularLocation>
</comment>
<comment type="similarity">
    <text evidence="1">Belongs to the class-I aminoacyl-tRNA synthetase family. Glutamate--tRNA ligase type 1 subfamily.</text>
</comment>
<organism>
    <name type="scientific">Francisella tularensis subsp. tularensis (strain SCHU S4 / Schu 4)</name>
    <dbReference type="NCBI Taxonomy" id="177416"/>
    <lineage>
        <taxon>Bacteria</taxon>
        <taxon>Pseudomonadati</taxon>
        <taxon>Pseudomonadota</taxon>
        <taxon>Gammaproteobacteria</taxon>
        <taxon>Thiotrichales</taxon>
        <taxon>Francisellaceae</taxon>
        <taxon>Francisella</taxon>
    </lineage>
</organism>
<dbReference type="EC" id="6.1.1.17" evidence="1"/>
<dbReference type="EMBL" id="AJ749949">
    <property type="protein sequence ID" value="CAG44940.1"/>
    <property type="molecule type" value="Genomic_DNA"/>
</dbReference>
<dbReference type="RefSeq" id="WP_003021625.1">
    <property type="nucleotide sequence ID" value="NC_006570.2"/>
</dbReference>
<dbReference type="RefSeq" id="YP_169356.1">
    <property type="nucleotide sequence ID" value="NC_006570.2"/>
</dbReference>
<dbReference type="SMR" id="Q5NHY6"/>
<dbReference type="IntAct" id="Q5NHY6">
    <property type="interactions" value="10"/>
</dbReference>
<dbReference type="STRING" id="177416.FTT_0307"/>
<dbReference type="DNASU" id="3191767"/>
<dbReference type="EnsemblBacteria" id="CAG44940">
    <property type="protein sequence ID" value="CAG44940"/>
    <property type="gene ID" value="FTT_0307"/>
</dbReference>
<dbReference type="KEGG" id="ftu:FTT_0307"/>
<dbReference type="eggNOG" id="COG0008">
    <property type="taxonomic scope" value="Bacteria"/>
</dbReference>
<dbReference type="OrthoDB" id="9807503at2"/>
<dbReference type="Proteomes" id="UP000001174">
    <property type="component" value="Chromosome"/>
</dbReference>
<dbReference type="GO" id="GO:0005829">
    <property type="term" value="C:cytosol"/>
    <property type="evidence" value="ECO:0007669"/>
    <property type="project" value="TreeGrafter"/>
</dbReference>
<dbReference type="GO" id="GO:0005524">
    <property type="term" value="F:ATP binding"/>
    <property type="evidence" value="ECO:0007669"/>
    <property type="project" value="UniProtKB-UniRule"/>
</dbReference>
<dbReference type="GO" id="GO:0004818">
    <property type="term" value="F:glutamate-tRNA ligase activity"/>
    <property type="evidence" value="ECO:0007669"/>
    <property type="project" value="UniProtKB-UniRule"/>
</dbReference>
<dbReference type="GO" id="GO:0000049">
    <property type="term" value="F:tRNA binding"/>
    <property type="evidence" value="ECO:0007669"/>
    <property type="project" value="InterPro"/>
</dbReference>
<dbReference type="GO" id="GO:0008270">
    <property type="term" value="F:zinc ion binding"/>
    <property type="evidence" value="ECO:0007669"/>
    <property type="project" value="UniProtKB-UniRule"/>
</dbReference>
<dbReference type="GO" id="GO:0006424">
    <property type="term" value="P:glutamyl-tRNA aminoacylation"/>
    <property type="evidence" value="ECO:0007669"/>
    <property type="project" value="UniProtKB-UniRule"/>
</dbReference>
<dbReference type="CDD" id="cd00808">
    <property type="entry name" value="GluRS_core"/>
    <property type="match status" value="1"/>
</dbReference>
<dbReference type="FunFam" id="3.40.50.620:FF:000007">
    <property type="entry name" value="Glutamate--tRNA ligase"/>
    <property type="match status" value="1"/>
</dbReference>
<dbReference type="Gene3D" id="1.10.10.350">
    <property type="match status" value="1"/>
</dbReference>
<dbReference type="Gene3D" id="3.40.50.620">
    <property type="entry name" value="HUPs"/>
    <property type="match status" value="1"/>
</dbReference>
<dbReference type="HAMAP" id="MF_00022">
    <property type="entry name" value="Glu_tRNA_synth_type1"/>
    <property type="match status" value="1"/>
</dbReference>
<dbReference type="InterPro" id="IPR045462">
    <property type="entry name" value="aa-tRNA-synth_I_cd-bd"/>
</dbReference>
<dbReference type="InterPro" id="IPR020751">
    <property type="entry name" value="aa-tRNA-synth_I_codon-bd_sub2"/>
</dbReference>
<dbReference type="InterPro" id="IPR001412">
    <property type="entry name" value="aa-tRNA-synth_I_CS"/>
</dbReference>
<dbReference type="InterPro" id="IPR008925">
    <property type="entry name" value="aa_tRNA-synth_I_cd-bd_sf"/>
</dbReference>
<dbReference type="InterPro" id="IPR004527">
    <property type="entry name" value="Glu-tRNA-ligase_bac/mito"/>
</dbReference>
<dbReference type="InterPro" id="IPR000924">
    <property type="entry name" value="Glu/Gln-tRNA-synth"/>
</dbReference>
<dbReference type="InterPro" id="IPR020058">
    <property type="entry name" value="Glu/Gln-tRNA-synth_Ib_cat-dom"/>
</dbReference>
<dbReference type="InterPro" id="IPR049940">
    <property type="entry name" value="GluQ/Sye"/>
</dbReference>
<dbReference type="InterPro" id="IPR033910">
    <property type="entry name" value="GluRS_core"/>
</dbReference>
<dbReference type="InterPro" id="IPR014729">
    <property type="entry name" value="Rossmann-like_a/b/a_fold"/>
</dbReference>
<dbReference type="NCBIfam" id="TIGR00464">
    <property type="entry name" value="gltX_bact"/>
    <property type="match status" value="1"/>
</dbReference>
<dbReference type="PANTHER" id="PTHR43311">
    <property type="entry name" value="GLUTAMATE--TRNA LIGASE"/>
    <property type="match status" value="1"/>
</dbReference>
<dbReference type="PANTHER" id="PTHR43311:SF2">
    <property type="entry name" value="GLUTAMATE--TRNA LIGASE, MITOCHONDRIAL-RELATED"/>
    <property type="match status" value="1"/>
</dbReference>
<dbReference type="Pfam" id="PF19269">
    <property type="entry name" value="Anticodon_2"/>
    <property type="match status" value="1"/>
</dbReference>
<dbReference type="Pfam" id="PF00749">
    <property type="entry name" value="tRNA-synt_1c"/>
    <property type="match status" value="1"/>
</dbReference>
<dbReference type="PRINTS" id="PR00987">
    <property type="entry name" value="TRNASYNTHGLU"/>
</dbReference>
<dbReference type="SUPFAM" id="SSF48163">
    <property type="entry name" value="An anticodon-binding domain of class I aminoacyl-tRNA synthetases"/>
    <property type="match status" value="1"/>
</dbReference>
<dbReference type="SUPFAM" id="SSF52374">
    <property type="entry name" value="Nucleotidylyl transferase"/>
    <property type="match status" value="1"/>
</dbReference>
<dbReference type="PROSITE" id="PS00178">
    <property type="entry name" value="AA_TRNA_LIGASE_I"/>
    <property type="match status" value="1"/>
</dbReference>
<reference key="1">
    <citation type="journal article" date="2005" name="Nat. Genet.">
        <title>The complete genome sequence of Francisella tularensis, the causative agent of tularemia.</title>
        <authorList>
            <person name="Larsson P."/>
            <person name="Oyston P.C.F."/>
            <person name="Chain P."/>
            <person name="Chu M.C."/>
            <person name="Duffield M."/>
            <person name="Fuxelius H.-H."/>
            <person name="Garcia E."/>
            <person name="Haelltorp G."/>
            <person name="Johansson D."/>
            <person name="Isherwood K.E."/>
            <person name="Karp P.D."/>
            <person name="Larsson E."/>
            <person name="Liu Y."/>
            <person name="Michell S."/>
            <person name="Prior J."/>
            <person name="Prior R."/>
            <person name="Malfatti S."/>
            <person name="Sjoestedt A."/>
            <person name="Svensson K."/>
            <person name="Thompson N."/>
            <person name="Vergez L."/>
            <person name="Wagg J.K."/>
            <person name="Wren B.W."/>
            <person name="Lindler L.E."/>
            <person name="Andersson S.G.E."/>
            <person name="Forsman M."/>
            <person name="Titball R.W."/>
        </authorList>
    </citation>
    <scope>NUCLEOTIDE SEQUENCE [LARGE SCALE GENOMIC DNA]</scope>
    <source>
        <strain>SCHU S4 / Schu 4</strain>
    </source>
</reference>
<evidence type="ECO:0000255" key="1">
    <source>
        <dbReference type="HAMAP-Rule" id="MF_00022"/>
    </source>
</evidence>
<gene>
    <name evidence="1" type="primary">gltX</name>
    <name type="ordered locus">FTT_0307</name>
</gene>
<keyword id="KW-0030">Aminoacyl-tRNA synthetase</keyword>
<keyword id="KW-0067">ATP-binding</keyword>
<keyword id="KW-0963">Cytoplasm</keyword>
<keyword id="KW-0436">Ligase</keyword>
<keyword id="KW-0479">Metal-binding</keyword>
<keyword id="KW-0547">Nucleotide-binding</keyword>
<keyword id="KW-0648">Protein biosynthesis</keyword>
<keyword id="KW-1185">Reference proteome</keyword>
<keyword id="KW-0862">Zinc</keyword>
<name>SYE_FRATT</name>
<protein>
    <recommendedName>
        <fullName evidence="1">Glutamate--tRNA ligase</fullName>
        <ecNumber evidence="1">6.1.1.17</ecNumber>
    </recommendedName>
    <alternativeName>
        <fullName evidence="1">Glutamyl-tRNA synthetase</fullName>
        <shortName evidence="1">GluRS</shortName>
    </alternativeName>
</protein>